<accession>B8F5G8</accession>
<comment type="subcellular location">
    <subcellularLocation>
        <location evidence="1">Cytoplasm</location>
    </subcellularLocation>
</comment>
<comment type="similarity">
    <text evidence="1">Belongs to the TACO1 family.</text>
</comment>
<evidence type="ECO:0000255" key="1">
    <source>
        <dbReference type="HAMAP-Rule" id="MF_00693"/>
    </source>
</evidence>
<sequence length="246" mass="26252">MAGHSKWANIKHRKAAQDAQRGKIFTKLIRELVTAAKLGGGDTSSNPRLRAAVDKALSNNMTRDTINRAIDRGVGGGDDTNMETKVYEGYGPGGTAVMVECLSDNANRTISQVRPSFTKCGGNLGTEGSVGYLFSKKGLILIASADEDALTEAAIEAGADDIQPQEDGSFEIYTAWEDLGSVRDGIEAAGFKVENAEVTMIPSTTVQLDAETAPKLLDLINRLEDCDDVQNVYHNGEISDEVAALL</sequence>
<keyword id="KW-0963">Cytoplasm</keyword>
<keyword id="KW-0238">DNA-binding</keyword>
<keyword id="KW-1185">Reference proteome</keyword>
<keyword id="KW-0804">Transcription</keyword>
<keyword id="KW-0805">Transcription regulation</keyword>
<proteinExistence type="inferred from homology"/>
<feature type="chain" id="PRO_1000200096" description="Probable transcriptional regulatory protein HAPS_0943">
    <location>
        <begin position="1"/>
        <end position="246"/>
    </location>
</feature>
<organism>
    <name type="scientific">Glaesserella parasuis serovar 5 (strain SH0165)</name>
    <name type="common">Haemophilus parasuis</name>
    <dbReference type="NCBI Taxonomy" id="557723"/>
    <lineage>
        <taxon>Bacteria</taxon>
        <taxon>Pseudomonadati</taxon>
        <taxon>Pseudomonadota</taxon>
        <taxon>Gammaproteobacteria</taxon>
        <taxon>Pasteurellales</taxon>
        <taxon>Pasteurellaceae</taxon>
        <taxon>Glaesserella</taxon>
    </lineage>
</organism>
<protein>
    <recommendedName>
        <fullName evidence="1">Probable transcriptional regulatory protein HAPS_0943</fullName>
    </recommendedName>
</protein>
<reference key="1">
    <citation type="journal article" date="2009" name="J. Bacteriol.">
        <title>Complete genome sequence of Haemophilus parasuis SH0165.</title>
        <authorList>
            <person name="Yue M."/>
            <person name="Yang F."/>
            <person name="Yang J."/>
            <person name="Bei W."/>
            <person name="Cai X."/>
            <person name="Chen L."/>
            <person name="Dong J."/>
            <person name="Zhou R."/>
            <person name="Jin M."/>
            <person name="Jin Q."/>
            <person name="Chen H."/>
        </authorList>
    </citation>
    <scope>NUCLEOTIDE SEQUENCE [LARGE SCALE GENOMIC DNA]</scope>
    <source>
        <strain>SH0165</strain>
    </source>
</reference>
<gene>
    <name type="ordered locus">HAPS_0943</name>
</gene>
<name>Y943_GLAP5</name>
<dbReference type="EMBL" id="CP001321">
    <property type="protein sequence ID" value="ACL32570.1"/>
    <property type="molecule type" value="Genomic_DNA"/>
</dbReference>
<dbReference type="RefSeq" id="WP_010786350.1">
    <property type="nucleotide sequence ID" value="NC_011852.1"/>
</dbReference>
<dbReference type="SMR" id="B8F5G8"/>
<dbReference type="STRING" id="557723.HAPS_0943"/>
<dbReference type="KEGG" id="hap:HAPS_0943"/>
<dbReference type="HOGENOM" id="CLU_062974_2_2_6"/>
<dbReference type="Proteomes" id="UP000006743">
    <property type="component" value="Chromosome"/>
</dbReference>
<dbReference type="GO" id="GO:0005829">
    <property type="term" value="C:cytosol"/>
    <property type="evidence" value="ECO:0007669"/>
    <property type="project" value="TreeGrafter"/>
</dbReference>
<dbReference type="GO" id="GO:0003677">
    <property type="term" value="F:DNA binding"/>
    <property type="evidence" value="ECO:0007669"/>
    <property type="project" value="UniProtKB-UniRule"/>
</dbReference>
<dbReference type="GO" id="GO:0006355">
    <property type="term" value="P:regulation of DNA-templated transcription"/>
    <property type="evidence" value="ECO:0007669"/>
    <property type="project" value="UniProtKB-UniRule"/>
</dbReference>
<dbReference type="FunFam" id="1.10.10.200:FF:000001">
    <property type="entry name" value="Probable transcriptional regulatory protein YebC"/>
    <property type="match status" value="1"/>
</dbReference>
<dbReference type="FunFam" id="3.30.70.980:FF:000002">
    <property type="entry name" value="Probable transcriptional regulatory protein YebC"/>
    <property type="match status" value="1"/>
</dbReference>
<dbReference type="Gene3D" id="1.10.10.200">
    <property type="match status" value="1"/>
</dbReference>
<dbReference type="Gene3D" id="3.30.70.980">
    <property type="match status" value="2"/>
</dbReference>
<dbReference type="HAMAP" id="MF_00693">
    <property type="entry name" value="Transcrip_reg_TACO1"/>
    <property type="match status" value="1"/>
</dbReference>
<dbReference type="InterPro" id="IPR017856">
    <property type="entry name" value="Integrase-like_N"/>
</dbReference>
<dbReference type="InterPro" id="IPR048300">
    <property type="entry name" value="TACO1_YebC-like_2nd/3rd_dom"/>
</dbReference>
<dbReference type="InterPro" id="IPR049083">
    <property type="entry name" value="TACO1_YebC_N"/>
</dbReference>
<dbReference type="InterPro" id="IPR002876">
    <property type="entry name" value="Transcrip_reg_TACO1-like"/>
</dbReference>
<dbReference type="InterPro" id="IPR026564">
    <property type="entry name" value="Transcrip_reg_TACO1-like_dom3"/>
</dbReference>
<dbReference type="InterPro" id="IPR029072">
    <property type="entry name" value="YebC-like"/>
</dbReference>
<dbReference type="NCBIfam" id="NF001030">
    <property type="entry name" value="PRK00110.1"/>
    <property type="match status" value="1"/>
</dbReference>
<dbReference type="NCBIfam" id="NF009044">
    <property type="entry name" value="PRK12378.1"/>
    <property type="match status" value="1"/>
</dbReference>
<dbReference type="NCBIfam" id="TIGR01033">
    <property type="entry name" value="YebC/PmpR family DNA-binding transcriptional regulator"/>
    <property type="match status" value="1"/>
</dbReference>
<dbReference type="PANTHER" id="PTHR12532:SF6">
    <property type="entry name" value="TRANSCRIPTIONAL REGULATORY PROTEIN YEBC-RELATED"/>
    <property type="match status" value="1"/>
</dbReference>
<dbReference type="PANTHER" id="PTHR12532">
    <property type="entry name" value="TRANSLATIONAL ACTIVATOR OF CYTOCHROME C OXIDASE 1"/>
    <property type="match status" value="1"/>
</dbReference>
<dbReference type="Pfam" id="PF20772">
    <property type="entry name" value="TACO1_YebC_N"/>
    <property type="match status" value="1"/>
</dbReference>
<dbReference type="Pfam" id="PF01709">
    <property type="entry name" value="Transcrip_reg"/>
    <property type="match status" value="1"/>
</dbReference>
<dbReference type="SUPFAM" id="SSF75625">
    <property type="entry name" value="YebC-like"/>
    <property type="match status" value="1"/>
</dbReference>